<accession>Q6FAQ6</accession>
<comment type="function">
    <text evidence="1">Catalyzes the formation of S-adenosylmethionine (AdoMet) from methionine and ATP. The overall synthetic reaction is composed of two sequential steps, AdoMet formation and the subsequent tripolyphosphate hydrolysis which occurs prior to release of AdoMet from the enzyme.</text>
</comment>
<comment type="catalytic activity">
    <reaction evidence="1">
        <text>L-methionine + ATP + H2O = S-adenosyl-L-methionine + phosphate + diphosphate</text>
        <dbReference type="Rhea" id="RHEA:21080"/>
        <dbReference type="ChEBI" id="CHEBI:15377"/>
        <dbReference type="ChEBI" id="CHEBI:30616"/>
        <dbReference type="ChEBI" id="CHEBI:33019"/>
        <dbReference type="ChEBI" id="CHEBI:43474"/>
        <dbReference type="ChEBI" id="CHEBI:57844"/>
        <dbReference type="ChEBI" id="CHEBI:59789"/>
        <dbReference type="EC" id="2.5.1.6"/>
    </reaction>
</comment>
<comment type="cofactor">
    <cofactor evidence="1">
        <name>Mg(2+)</name>
        <dbReference type="ChEBI" id="CHEBI:18420"/>
    </cofactor>
    <text evidence="1">Binds 2 divalent ions per subunit.</text>
</comment>
<comment type="cofactor">
    <cofactor evidence="1">
        <name>K(+)</name>
        <dbReference type="ChEBI" id="CHEBI:29103"/>
    </cofactor>
    <text evidence="1">Binds 1 potassium ion per subunit.</text>
</comment>
<comment type="pathway">
    <text evidence="1">Amino-acid biosynthesis; S-adenosyl-L-methionine biosynthesis; S-adenosyl-L-methionine from L-methionine: step 1/1.</text>
</comment>
<comment type="subunit">
    <text evidence="1">Homotetramer; dimer of dimers.</text>
</comment>
<comment type="subcellular location">
    <subcellularLocation>
        <location evidence="1">Cytoplasm</location>
    </subcellularLocation>
</comment>
<comment type="similarity">
    <text evidence="1">Belongs to the AdoMet synthase family.</text>
</comment>
<reference key="1">
    <citation type="journal article" date="2004" name="Nucleic Acids Res.">
        <title>Unique features revealed by the genome sequence of Acinetobacter sp. ADP1, a versatile and naturally transformation competent bacterium.</title>
        <authorList>
            <person name="Barbe V."/>
            <person name="Vallenet D."/>
            <person name="Fonknechten N."/>
            <person name="Kreimeyer A."/>
            <person name="Oztas S."/>
            <person name="Labarre L."/>
            <person name="Cruveiller S."/>
            <person name="Robert C."/>
            <person name="Duprat S."/>
            <person name="Wincker P."/>
            <person name="Ornston L.N."/>
            <person name="Weissenbach J."/>
            <person name="Marliere P."/>
            <person name="Cohen G.N."/>
            <person name="Medigue C."/>
        </authorList>
    </citation>
    <scope>NUCLEOTIDE SEQUENCE [LARGE SCALE GENOMIC DNA]</scope>
    <source>
        <strain>ATCC 33305 / BD413 / ADP1</strain>
    </source>
</reference>
<keyword id="KW-0067">ATP-binding</keyword>
<keyword id="KW-0963">Cytoplasm</keyword>
<keyword id="KW-0460">Magnesium</keyword>
<keyword id="KW-0479">Metal-binding</keyword>
<keyword id="KW-0547">Nucleotide-binding</keyword>
<keyword id="KW-0554">One-carbon metabolism</keyword>
<keyword id="KW-0630">Potassium</keyword>
<keyword id="KW-0808">Transferase</keyword>
<feature type="chain" id="PRO_0000174479" description="S-adenosylmethionine synthase">
    <location>
        <begin position="1"/>
        <end position="388"/>
    </location>
</feature>
<feature type="region of interest" description="Flexible loop" evidence="1">
    <location>
        <begin position="100"/>
        <end position="110"/>
    </location>
</feature>
<feature type="binding site" description="in other chain" evidence="1">
    <location>
        <position position="16"/>
    </location>
    <ligand>
        <name>ATP</name>
        <dbReference type="ChEBI" id="CHEBI:30616"/>
        <note>ligand shared between two neighboring subunits</note>
    </ligand>
</feature>
<feature type="binding site" evidence="1">
    <location>
        <position position="18"/>
    </location>
    <ligand>
        <name>Mg(2+)</name>
        <dbReference type="ChEBI" id="CHEBI:18420"/>
    </ligand>
</feature>
<feature type="binding site" evidence="1">
    <location>
        <position position="44"/>
    </location>
    <ligand>
        <name>K(+)</name>
        <dbReference type="ChEBI" id="CHEBI:29103"/>
    </ligand>
</feature>
<feature type="binding site" description="in other chain" evidence="1">
    <location>
        <position position="57"/>
    </location>
    <ligand>
        <name>L-methionine</name>
        <dbReference type="ChEBI" id="CHEBI:57844"/>
        <note>ligand shared between two neighboring subunits</note>
    </ligand>
</feature>
<feature type="binding site" description="in other chain" evidence="1">
    <location>
        <position position="100"/>
    </location>
    <ligand>
        <name>L-methionine</name>
        <dbReference type="ChEBI" id="CHEBI:57844"/>
        <note>ligand shared between two neighboring subunits</note>
    </ligand>
</feature>
<feature type="binding site" description="in other chain" evidence="1">
    <location>
        <begin position="165"/>
        <end position="167"/>
    </location>
    <ligand>
        <name>ATP</name>
        <dbReference type="ChEBI" id="CHEBI:30616"/>
        <note>ligand shared between two neighboring subunits</note>
    </ligand>
</feature>
<feature type="binding site" evidence="1">
    <location>
        <position position="240"/>
    </location>
    <ligand>
        <name>ATP</name>
        <dbReference type="ChEBI" id="CHEBI:30616"/>
        <note>ligand shared between two neighboring subunits</note>
    </ligand>
</feature>
<feature type="binding site" evidence="1">
    <location>
        <position position="240"/>
    </location>
    <ligand>
        <name>L-methionine</name>
        <dbReference type="ChEBI" id="CHEBI:57844"/>
        <note>ligand shared between two neighboring subunits</note>
    </ligand>
</feature>
<feature type="binding site" description="in other chain" evidence="1">
    <location>
        <begin position="246"/>
        <end position="247"/>
    </location>
    <ligand>
        <name>ATP</name>
        <dbReference type="ChEBI" id="CHEBI:30616"/>
        <note>ligand shared between two neighboring subunits</note>
    </ligand>
</feature>
<feature type="binding site" evidence="1">
    <location>
        <position position="263"/>
    </location>
    <ligand>
        <name>ATP</name>
        <dbReference type="ChEBI" id="CHEBI:30616"/>
        <note>ligand shared between two neighboring subunits</note>
    </ligand>
</feature>
<feature type="binding site" evidence="1">
    <location>
        <position position="267"/>
    </location>
    <ligand>
        <name>ATP</name>
        <dbReference type="ChEBI" id="CHEBI:30616"/>
        <note>ligand shared between two neighboring subunits</note>
    </ligand>
</feature>
<feature type="binding site" description="in other chain" evidence="1">
    <location>
        <position position="271"/>
    </location>
    <ligand>
        <name>L-methionine</name>
        <dbReference type="ChEBI" id="CHEBI:57844"/>
        <note>ligand shared between two neighboring subunits</note>
    </ligand>
</feature>
<gene>
    <name evidence="1" type="primary">metK</name>
    <name type="ordered locus">ACIAD2037</name>
</gene>
<sequence>MREYAVFTSESVSEGHPDKMADQISDAILDAILKEDPYARVACETLVKTGAVVLAGEITTTANVDFEAIVRQTVNGIGYHHSDLGFDGSTCAIINMIGKQSPEIAQGVDRQKPEDQGAGDQGLMFGYASRETDVLMPAPISYAHRLMERQAELRRSGALPWLRPDAKSQVTFAYENGMPVRLDAVVLSTQHDPEISQAQLKEAVIEEIVKPVIPSEMFHAGTKFHINPTGMFVIGGPVGDCGLTGRKIIVDTYGGMARHGGGAFSGKDPSKVDRSAAYAGRYVAKNIVAAGLADKCEIQVSYAIGVAEPTSISINTFNTAKVDEELIIALVREHFDLRPYGITRMLDLLQPMYKQTAAYGHFGREGSDTAFTWEKTDKVEVLKDAAGL</sequence>
<dbReference type="EC" id="2.5.1.6" evidence="1"/>
<dbReference type="EMBL" id="CR543861">
    <property type="protein sequence ID" value="CAG68857.1"/>
    <property type="molecule type" value="Genomic_DNA"/>
</dbReference>
<dbReference type="RefSeq" id="WP_004927441.1">
    <property type="nucleotide sequence ID" value="NC_005966.1"/>
</dbReference>
<dbReference type="SMR" id="Q6FAQ6"/>
<dbReference type="STRING" id="202950.GCA_001485005_00337"/>
<dbReference type="GeneID" id="45234393"/>
<dbReference type="KEGG" id="aci:ACIAD2037"/>
<dbReference type="eggNOG" id="COG0192">
    <property type="taxonomic scope" value="Bacteria"/>
</dbReference>
<dbReference type="HOGENOM" id="CLU_041802_1_1_6"/>
<dbReference type="OrthoDB" id="9801686at2"/>
<dbReference type="BioCyc" id="ASP62977:ACIAD_RS09370-MONOMER"/>
<dbReference type="UniPathway" id="UPA00315">
    <property type="reaction ID" value="UER00080"/>
</dbReference>
<dbReference type="Proteomes" id="UP000000430">
    <property type="component" value="Chromosome"/>
</dbReference>
<dbReference type="GO" id="GO:0005737">
    <property type="term" value="C:cytoplasm"/>
    <property type="evidence" value="ECO:0007669"/>
    <property type="project" value="UniProtKB-SubCell"/>
</dbReference>
<dbReference type="GO" id="GO:0005524">
    <property type="term" value="F:ATP binding"/>
    <property type="evidence" value="ECO:0007669"/>
    <property type="project" value="UniProtKB-UniRule"/>
</dbReference>
<dbReference type="GO" id="GO:0000287">
    <property type="term" value="F:magnesium ion binding"/>
    <property type="evidence" value="ECO:0007669"/>
    <property type="project" value="UniProtKB-UniRule"/>
</dbReference>
<dbReference type="GO" id="GO:0004478">
    <property type="term" value="F:methionine adenosyltransferase activity"/>
    <property type="evidence" value="ECO:0007669"/>
    <property type="project" value="UniProtKB-UniRule"/>
</dbReference>
<dbReference type="GO" id="GO:0006730">
    <property type="term" value="P:one-carbon metabolic process"/>
    <property type="evidence" value="ECO:0007669"/>
    <property type="project" value="UniProtKB-KW"/>
</dbReference>
<dbReference type="GO" id="GO:0006556">
    <property type="term" value="P:S-adenosylmethionine biosynthetic process"/>
    <property type="evidence" value="ECO:0007669"/>
    <property type="project" value="UniProtKB-UniRule"/>
</dbReference>
<dbReference type="CDD" id="cd18079">
    <property type="entry name" value="S-AdoMet_synt"/>
    <property type="match status" value="1"/>
</dbReference>
<dbReference type="FunFam" id="3.30.300.10:FF:000003">
    <property type="entry name" value="S-adenosylmethionine synthase"/>
    <property type="match status" value="1"/>
</dbReference>
<dbReference type="Gene3D" id="3.30.300.10">
    <property type="match status" value="3"/>
</dbReference>
<dbReference type="HAMAP" id="MF_00086">
    <property type="entry name" value="S_AdoMet_synth1"/>
    <property type="match status" value="1"/>
</dbReference>
<dbReference type="InterPro" id="IPR022631">
    <property type="entry name" value="ADOMET_SYNTHASE_CS"/>
</dbReference>
<dbReference type="InterPro" id="IPR022630">
    <property type="entry name" value="S-AdoMet_synt_C"/>
</dbReference>
<dbReference type="InterPro" id="IPR022629">
    <property type="entry name" value="S-AdoMet_synt_central"/>
</dbReference>
<dbReference type="InterPro" id="IPR022628">
    <property type="entry name" value="S-AdoMet_synt_N"/>
</dbReference>
<dbReference type="InterPro" id="IPR002133">
    <property type="entry name" value="S-AdoMet_synthetase"/>
</dbReference>
<dbReference type="InterPro" id="IPR022636">
    <property type="entry name" value="S-AdoMet_synthetase_sfam"/>
</dbReference>
<dbReference type="NCBIfam" id="TIGR01034">
    <property type="entry name" value="metK"/>
    <property type="match status" value="1"/>
</dbReference>
<dbReference type="PANTHER" id="PTHR11964">
    <property type="entry name" value="S-ADENOSYLMETHIONINE SYNTHETASE"/>
    <property type="match status" value="1"/>
</dbReference>
<dbReference type="Pfam" id="PF02773">
    <property type="entry name" value="S-AdoMet_synt_C"/>
    <property type="match status" value="1"/>
</dbReference>
<dbReference type="Pfam" id="PF02772">
    <property type="entry name" value="S-AdoMet_synt_M"/>
    <property type="match status" value="1"/>
</dbReference>
<dbReference type="Pfam" id="PF00438">
    <property type="entry name" value="S-AdoMet_synt_N"/>
    <property type="match status" value="1"/>
</dbReference>
<dbReference type="PIRSF" id="PIRSF000497">
    <property type="entry name" value="MAT"/>
    <property type="match status" value="1"/>
</dbReference>
<dbReference type="SUPFAM" id="SSF55973">
    <property type="entry name" value="S-adenosylmethionine synthetase"/>
    <property type="match status" value="3"/>
</dbReference>
<dbReference type="PROSITE" id="PS00376">
    <property type="entry name" value="ADOMET_SYNTHASE_1"/>
    <property type="match status" value="1"/>
</dbReference>
<dbReference type="PROSITE" id="PS00377">
    <property type="entry name" value="ADOMET_SYNTHASE_2"/>
    <property type="match status" value="1"/>
</dbReference>
<organism>
    <name type="scientific">Acinetobacter baylyi (strain ATCC 33305 / BD413 / ADP1)</name>
    <dbReference type="NCBI Taxonomy" id="62977"/>
    <lineage>
        <taxon>Bacteria</taxon>
        <taxon>Pseudomonadati</taxon>
        <taxon>Pseudomonadota</taxon>
        <taxon>Gammaproteobacteria</taxon>
        <taxon>Moraxellales</taxon>
        <taxon>Moraxellaceae</taxon>
        <taxon>Acinetobacter</taxon>
    </lineage>
</organism>
<proteinExistence type="inferred from homology"/>
<protein>
    <recommendedName>
        <fullName evidence="1">S-adenosylmethionine synthase</fullName>
        <shortName evidence="1">AdoMet synthase</shortName>
        <ecNumber evidence="1">2.5.1.6</ecNumber>
    </recommendedName>
    <alternativeName>
        <fullName evidence="1">MAT</fullName>
    </alternativeName>
    <alternativeName>
        <fullName evidence="1">Methionine adenosyltransferase</fullName>
    </alternativeName>
</protein>
<evidence type="ECO:0000255" key="1">
    <source>
        <dbReference type="HAMAP-Rule" id="MF_00086"/>
    </source>
</evidence>
<name>METK_ACIAD</name>